<comment type="subcellular location">
    <subcellularLocation>
        <location evidence="1">Bacterial flagellum basal body</location>
    </subcellularLocation>
</comment>
<comment type="similarity">
    <text evidence="1">Belongs to the FliE family.</text>
</comment>
<dbReference type="EMBL" id="CP000857">
    <property type="protein sequence ID" value="ACN45890.1"/>
    <property type="molecule type" value="Genomic_DNA"/>
</dbReference>
<dbReference type="RefSeq" id="WP_000719042.1">
    <property type="nucleotide sequence ID" value="NC_012125.1"/>
</dbReference>
<dbReference type="SMR" id="C0Q287"/>
<dbReference type="KEGG" id="sei:SPC_1746"/>
<dbReference type="HOGENOM" id="CLU_147249_0_2_6"/>
<dbReference type="Proteomes" id="UP000001599">
    <property type="component" value="Chromosome"/>
</dbReference>
<dbReference type="GO" id="GO:0009425">
    <property type="term" value="C:bacterial-type flagellum basal body"/>
    <property type="evidence" value="ECO:0007669"/>
    <property type="project" value="UniProtKB-SubCell"/>
</dbReference>
<dbReference type="GO" id="GO:0003774">
    <property type="term" value="F:cytoskeletal motor activity"/>
    <property type="evidence" value="ECO:0007669"/>
    <property type="project" value="InterPro"/>
</dbReference>
<dbReference type="GO" id="GO:0005198">
    <property type="term" value="F:structural molecule activity"/>
    <property type="evidence" value="ECO:0007669"/>
    <property type="project" value="InterPro"/>
</dbReference>
<dbReference type="GO" id="GO:0071973">
    <property type="term" value="P:bacterial-type flagellum-dependent cell motility"/>
    <property type="evidence" value="ECO:0007669"/>
    <property type="project" value="InterPro"/>
</dbReference>
<dbReference type="HAMAP" id="MF_00724">
    <property type="entry name" value="FliE"/>
    <property type="match status" value="1"/>
</dbReference>
<dbReference type="InterPro" id="IPR001624">
    <property type="entry name" value="FliE"/>
</dbReference>
<dbReference type="NCBIfam" id="TIGR00205">
    <property type="entry name" value="fliE"/>
    <property type="match status" value="1"/>
</dbReference>
<dbReference type="PANTHER" id="PTHR34653">
    <property type="match status" value="1"/>
</dbReference>
<dbReference type="PANTHER" id="PTHR34653:SF1">
    <property type="entry name" value="FLAGELLAR HOOK-BASAL BODY COMPLEX PROTEIN FLIE"/>
    <property type="match status" value="1"/>
</dbReference>
<dbReference type="Pfam" id="PF02049">
    <property type="entry name" value="FliE"/>
    <property type="match status" value="1"/>
</dbReference>
<dbReference type="PRINTS" id="PR01006">
    <property type="entry name" value="FLGHOOKFLIE"/>
</dbReference>
<sequence length="104" mass="11053">MAAIQGIEGVISQLQATAMAASGQETHSQSTVSFAGQLHAALDRISDRQTAARVQAEKFTLGEPGIALNDVMADMQKASVSMQMGIQVRNKLVAAYQEVMSMQV</sequence>
<accession>C0Q287</accession>
<organism>
    <name type="scientific">Salmonella paratyphi C (strain RKS4594)</name>
    <dbReference type="NCBI Taxonomy" id="476213"/>
    <lineage>
        <taxon>Bacteria</taxon>
        <taxon>Pseudomonadati</taxon>
        <taxon>Pseudomonadota</taxon>
        <taxon>Gammaproteobacteria</taxon>
        <taxon>Enterobacterales</taxon>
        <taxon>Enterobacteriaceae</taxon>
        <taxon>Salmonella</taxon>
    </lineage>
</organism>
<protein>
    <recommendedName>
        <fullName evidence="1">Flagellar hook-basal body complex protein FliE</fullName>
    </recommendedName>
</protein>
<proteinExistence type="inferred from homology"/>
<gene>
    <name evidence="1" type="primary">fliE</name>
    <name type="ordered locus">SPC_1746</name>
</gene>
<name>FLIE_SALPC</name>
<evidence type="ECO:0000255" key="1">
    <source>
        <dbReference type="HAMAP-Rule" id="MF_00724"/>
    </source>
</evidence>
<keyword id="KW-0975">Bacterial flagellum</keyword>
<feature type="chain" id="PRO_1000148054" description="Flagellar hook-basal body complex protein FliE">
    <location>
        <begin position="1"/>
        <end position="104"/>
    </location>
</feature>
<reference key="1">
    <citation type="journal article" date="2009" name="PLoS ONE">
        <title>Salmonella paratyphi C: genetic divergence from Salmonella choleraesuis and pathogenic convergence with Salmonella typhi.</title>
        <authorList>
            <person name="Liu W.-Q."/>
            <person name="Feng Y."/>
            <person name="Wang Y."/>
            <person name="Zou Q.-H."/>
            <person name="Chen F."/>
            <person name="Guo J.-T."/>
            <person name="Peng Y.-H."/>
            <person name="Jin Y."/>
            <person name="Li Y.-G."/>
            <person name="Hu S.-N."/>
            <person name="Johnston R.N."/>
            <person name="Liu G.-R."/>
            <person name="Liu S.-L."/>
        </authorList>
    </citation>
    <scope>NUCLEOTIDE SEQUENCE [LARGE SCALE GENOMIC DNA]</scope>
    <source>
        <strain>RKS4594</strain>
    </source>
</reference>